<gene>
    <name type="ordered locus">BU585</name>
</gene>
<dbReference type="EMBL" id="BA000003">
    <property type="protein sequence ID" value="BAB13274.1"/>
    <property type="molecule type" value="Genomic_DNA"/>
</dbReference>
<dbReference type="RefSeq" id="NP_240388.1">
    <property type="nucleotide sequence ID" value="NC_002528.1"/>
</dbReference>
<dbReference type="RefSeq" id="WP_010896176.1">
    <property type="nucleotide sequence ID" value="NC_002528.1"/>
</dbReference>
<dbReference type="SMR" id="P57645"/>
<dbReference type="STRING" id="563178.BUAP5A_578"/>
<dbReference type="EnsemblBacteria" id="BAB13274">
    <property type="protein sequence ID" value="BAB13274"/>
    <property type="gene ID" value="BAB13274"/>
</dbReference>
<dbReference type="KEGG" id="buc:BU585"/>
<dbReference type="PATRIC" id="fig|107806.10.peg.590"/>
<dbReference type="eggNOG" id="ENOG5031MFZ">
    <property type="taxonomic scope" value="Bacteria"/>
</dbReference>
<dbReference type="HOGENOM" id="CLU_2141114_0_0_6"/>
<dbReference type="BioCyc" id="BAPH107806:GBZJ-578-MONOMER"/>
<dbReference type="Proteomes" id="UP000001806">
    <property type="component" value="Chromosome"/>
</dbReference>
<organism>
    <name type="scientific">Buchnera aphidicola subsp. Acyrthosiphon pisum (strain APS)</name>
    <name type="common">Acyrthosiphon pisum symbiotic bacterium</name>
    <dbReference type="NCBI Taxonomy" id="107806"/>
    <lineage>
        <taxon>Bacteria</taxon>
        <taxon>Pseudomonadati</taxon>
        <taxon>Pseudomonadota</taxon>
        <taxon>Gammaproteobacteria</taxon>
        <taxon>Enterobacterales</taxon>
        <taxon>Erwiniaceae</taxon>
        <taxon>Buchnera</taxon>
    </lineage>
</organism>
<comment type="similarity">
    <text evidence="1">To Buchnera BUsg564.</text>
</comment>
<evidence type="ECO:0000305" key="1"/>
<reference key="1">
    <citation type="journal article" date="2000" name="Nature">
        <title>Genome sequence of the endocellular bacterial symbiont of aphids Buchnera sp. APS.</title>
        <authorList>
            <person name="Shigenobu S."/>
            <person name="Watanabe H."/>
            <person name="Hattori M."/>
            <person name="Sakaki Y."/>
            <person name="Ishikawa H."/>
        </authorList>
    </citation>
    <scope>NUCLEOTIDE SEQUENCE [LARGE SCALE GENOMIC DNA]</scope>
    <source>
        <strain>APS</strain>
    </source>
</reference>
<keyword id="KW-1185">Reference proteome</keyword>
<name>Y585_BUCAI</name>
<accession>P57645</accession>
<feature type="chain" id="PRO_0000216264" description="Uncharacterized protein BU585">
    <location>
        <begin position="1"/>
        <end position="112"/>
    </location>
</feature>
<proteinExistence type="predicted"/>
<protein>
    <recommendedName>
        <fullName>Uncharacterized protein BU585</fullName>
    </recommendedName>
    <alternativeName>
        <fullName>yba4</fullName>
    </alternativeName>
</protein>
<sequence>MLHNLLLNPNQSNKTHPNTIDIYTDAIKTMFETNKNQTVSKKNDQNTYDLEDENKLIDLENSYKKSLILLNILQKKIEQNILEKYNLEKNNNNITDNSDNEIIQNTLIKKNS</sequence>